<reference key="1">
    <citation type="submission" date="2003-10" db="EMBL/GenBank/DDBJ databases">
        <title>Subtilisin-like proteases gene family in Dermatophytes.</title>
        <authorList>
            <person name="Jousson O."/>
            <person name="Monod M."/>
        </authorList>
    </citation>
    <scope>NUCLEOTIDE SEQUENCE [GENOMIC DNA]</scope>
</reference>
<gene>
    <name type="primary">SUB2</name>
</gene>
<dbReference type="EC" id="3.4.21.-"/>
<dbReference type="EMBL" id="AY439106">
    <property type="protein sequence ID" value="AAS45674.1"/>
    <property type="status" value="ALT_SEQ"/>
    <property type="molecule type" value="Genomic_DNA"/>
</dbReference>
<dbReference type="SMR" id="Q5VJ76"/>
<dbReference type="GlyCosmos" id="Q5VJ76">
    <property type="glycosylation" value="4 sites, No reported glycans"/>
</dbReference>
<dbReference type="GO" id="GO:0005576">
    <property type="term" value="C:extracellular region"/>
    <property type="evidence" value="ECO:0007669"/>
    <property type="project" value="UniProtKB-SubCell"/>
</dbReference>
<dbReference type="GO" id="GO:0004252">
    <property type="term" value="F:serine-type endopeptidase activity"/>
    <property type="evidence" value="ECO:0007669"/>
    <property type="project" value="InterPro"/>
</dbReference>
<dbReference type="GO" id="GO:0006508">
    <property type="term" value="P:proteolysis"/>
    <property type="evidence" value="ECO:0007669"/>
    <property type="project" value="UniProtKB-KW"/>
</dbReference>
<dbReference type="CDD" id="cd04077">
    <property type="entry name" value="Peptidases_S8_PCSK9_ProteinaseK_like"/>
    <property type="match status" value="1"/>
</dbReference>
<dbReference type="FunFam" id="3.40.50.200:FF:000007">
    <property type="entry name" value="Subtilisin-like serine protease"/>
    <property type="match status" value="1"/>
</dbReference>
<dbReference type="Gene3D" id="3.30.70.80">
    <property type="entry name" value="Peptidase S8 propeptide/proteinase inhibitor I9"/>
    <property type="match status" value="1"/>
</dbReference>
<dbReference type="Gene3D" id="3.40.50.200">
    <property type="entry name" value="Peptidase S8/S53 domain"/>
    <property type="match status" value="1"/>
</dbReference>
<dbReference type="InterPro" id="IPR034193">
    <property type="entry name" value="PCSK9_ProteinaseK-like"/>
</dbReference>
<dbReference type="InterPro" id="IPR000209">
    <property type="entry name" value="Peptidase_S8/S53_dom"/>
</dbReference>
<dbReference type="InterPro" id="IPR036852">
    <property type="entry name" value="Peptidase_S8/S53_dom_sf"/>
</dbReference>
<dbReference type="InterPro" id="IPR023827">
    <property type="entry name" value="Peptidase_S8_Asp-AS"/>
</dbReference>
<dbReference type="InterPro" id="IPR022398">
    <property type="entry name" value="Peptidase_S8_His-AS"/>
</dbReference>
<dbReference type="InterPro" id="IPR023828">
    <property type="entry name" value="Peptidase_S8_Ser-AS"/>
</dbReference>
<dbReference type="InterPro" id="IPR050131">
    <property type="entry name" value="Peptidase_S8_subtilisin-like"/>
</dbReference>
<dbReference type="InterPro" id="IPR015500">
    <property type="entry name" value="Peptidase_S8_subtilisin-rel"/>
</dbReference>
<dbReference type="InterPro" id="IPR010259">
    <property type="entry name" value="S8pro/Inhibitor_I9"/>
</dbReference>
<dbReference type="InterPro" id="IPR037045">
    <property type="entry name" value="S8pro/Inhibitor_I9_sf"/>
</dbReference>
<dbReference type="PANTHER" id="PTHR43806:SF58">
    <property type="entry name" value="ALKALINE PROTEASE 1-RELATED"/>
    <property type="match status" value="1"/>
</dbReference>
<dbReference type="PANTHER" id="PTHR43806">
    <property type="entry name" value="PEPTIDASE S8"/>
    <property type="match status" value="1"/>
</dbReference>
<dbReference type="Pfam" id="PF05922">
    <property type="entry name" value="Inhibitor_I9"/>
    <property type="match status" value="1"/>
</dbReference>
<dbReference type="Pfam" id="PF00082">
    <property type="entry name" value="Peptidase_S8"/>
    <property type="match status" value="1"/>
</dbReference>
<dbReference type="PRINTS" id="PR00723">
    <property type="entry name" value="SUBTILISIN"/>
</dbReference>
<dbReference type="SUPFAM" id="SSF52743">
    <property type="entry name" value="Subtilisin-like"/>
    <property type="match status" value="1"/>
</dbReference>
<dbReference type="PROSITE" id="PS51892">
    <property type="entry name" value="SUBTILASE"/>
    <property type="match status" value="1"/>
</dbReference>
<dbReference type="PROSITE" id="PS00136">
    <property type="entry name" value="SUBTILASE_ASP"/>
    <property type="match status" value="1"/>
</dbReference>
<dbReference type="PROSITE" id="PS00137">
    <property type="entry name" value="SUBTILASE_HIS"/>
    <property type="match status" value="1"/>
</dbReference>
<dbReference type="PROSITE" id="PS00138">
    <property type="entry name" value="SUBTILASE_SER"/>
    <property type="match status" value="1"/>
</dbReference>
<feature type="signal peptide" evidence="2">
    <location>
        <begin position="1"/>
        <end position="16"/>
    </location>
</feature>
<feature type="propeptide" id="PRO_0000380774" evidence="1">
    <location>
        <begin position="17"/>
        <end position="122"/>
    </location>
</feature>
<feature type="chain" id="PRO_0000380775" description="Subtilisin-like protease 2">
    <location>
        <begin position="123"/>
        <end position="419"/>
    </location>
</feature>
<feature type="domain" description="Inhibitor I9" evidence="2">
    <location>
        <begin position="36"/>
        <end position="122"/>
    </location>
</feature>
<feature type="domain" description="Peptidase S8" evidence="3">
    <location>
        <begin position="131"/>
        <end position="419"/>
    </location>
</feature>
<feature type="active site" description="Charge relay system" evidence="3">
    <location>
        <position position="169"/>
    </location>
</feature>
<feature type="active site" description="Charge relay system" evidence="3">
    <location>
        <position position="201"/>
    </location>
</feature>
<feature type="active site" description="Charge relay system" evidence="3">
    <location>
        <position position="357"/>
    </location>
</feature>
<feature type="glycosylation site" description="N-linked (GlcNAc...) asparagine" evidence="2">
    <location>
        <position position="248"/>
    </location>
</feature>
<feature type="glycosylation site" description="N-linked (GlcNAc...) asparagine" evidence="2">
    <location>
        <position position="261"/>
    </location>
</feature>
<feature type="glycosylation site" description="N-linked (GlcNAc...) asparagine" evidence="2">
    <location>
        <position position="348"/>
    </location>
</feature>
<feature type="glycosylation site" description="N-linked (GlcNAc...) asparagine" evidence="2">
    <location>
        <position position="388"/>
    </location>
</feature>
<accession>Q5VJ76</accession>
<protein>
    <recommendedName>
        <fullName>Subtilisin-like protease 2</fullName>
        <ecNumber>3.4.21.-</ecNumber>
    </recommendedName>
</protein>
<keyword id="KW-0325">Glycoprotein</keyword>
<keyword id="KW-0378">Hydrolase</keyword>
<keyword id="KW-0645">Protease</keyword>
<keyword id="KW-0964">Secreted</keyword>
<keyword id="KW-0720">Serine protease</keyword>
<keyword id="KW-0732">Signal</keyword>
<keyword id="KW-0843">Virulence</keyword>
<keyword id="KW-0865">Zymogen</keyword>
<sequence length="419" mass="45337">MQLLNFGLLLLPFVAGDLAPQPEPLLAGPSDVVPGQYIVTLKEGLTSAQIRDHKKWVSSVHRANLDSFAAGASGVETEGIMKHFHIHDLNMYSGGFDEKTVEDLSRNPYVKSVHPDQHVYLAKTVTQRQARWGLGYMSSKGKPVPLHSTLVDYSYDDKAGEGVWAYVLDTGINVNHIEFEGRAILGHNAIPNKPHTDEFGHGTYVAGIIAGKTYGVAKKANVVSAKAFDTGSSTYNYILETYDWIVRNITDSNRKNKAVINLSISGAKYQPFDDAVEKAFKAGITTVVAAGNDGKDAKNNTPASSPNAITVGAVRWENTRPSFSNYGKLVDIWAPGELIKSCWKGGNNATSTQSGTSAASPHVAGLVAYLMSIENLPSPSAVTARVLNLTIPNLVKDAKDSPNRVAYNGIQERKFKLPK</sequence>
<comment type="function">
    <text evidence="1">Secreted subtilisin-like serine protease with keratinolytic activity that contributes to pathogenicity.</text>
</comment>
<comment type="subcellular location">
    <subcellularLocation>
        <location evidence="1">Secreted</location>
    </subcellularLocation>
</comment>
<comment type="similarity">
    <text evidence="4">Belongs to the peptidase S8 family.</text>
</comment>
<comment type="sequence caution" evidence="4">
    <conflict type="erroneous gene model prediction">
        <sequence resource="EMBL-CDS" id="AAS45674"/>
    </conflict>
</comment>
<organism>
    <name type="scientific">Trichophyton verrucosum</name>
    <name type="common">Cattle ringworm fungus</name>
    <dbReference type="NCBI Taxonomy" id="63417"/>
    <lineage>
        <taxon>Eukaryota</taxon>
        <taxon>Fungi</taxon>
        <taxon>Dikarya</taxon>
        <taxon>Ascomycota</taxon>
        <taxon>Pezizomycotina</taxon>
        <taxon>Eurotiomycetes</taxon>
        <taxon>Eurotiomycetidae</taxon>
        <taxon>Onygenales</taxon>
        <taxon>Arthrodermataceae</taxon>
        <taxon>Trichophyton</taxon>
    </lineage>
</organism>
<name>SUB2_TRIVC</name>
<evidence type="ECO:0000250" key="1"/>
<evidence type="ECO:0000255" key="2"/>
<evidence type="ECO:0000255" key="3">
    <source>
        <dbReference type="PROSITE-ProRule" id="PRU01240"/>
    </source>
</evidence>
<evidence type="ECO:0000305" key="4"/>
<proteinExistence type="inferred from homology"/>